<name>ADNT1_ARATH</name>
<reference key="1">
    <citation type="journal article" date="2008" name="Plant Physiol.">
        <title>Identification and characterization of ADNT1, a novel mitochondrial adenine nucleotide transporter from Arabidopsis.</title>
        <authorList>
            <person name="Palmieri L."/>
            <person name="Santoro A."/>
            <person name="Carrari F."/>
            <person name="Blanco E."/>
            <person name="Nunes-Nesi A."/>
            <person name="Arrigoni R."/>
            <person name="Genchi F."/>
            <person name="Fernie A.R."/>
            <person name="Palmieri F."/>
        </authorList>
    </citation>
    <scope>NUCLEOTIDE SEQUENCE [MRNA]</scope>
    <scope>FUNCTION</scope>
    <scope>ACTIVITY REGULATION</scope>
    <scope>SUBCELLULAR LOCATION</scope>
    <scope>TISSUE SPECIFICITY</scope>
    <scope>DISRUPTION PHENOTYPE</scope>
    <source>
        <strain>cv. Landsberg erecta</strain>
    </source>
</reference>
<reference key="2">
    <citation type="journal article" date="1999" name="Nature">
        <title>Sequence and analysis of chromosome 4 of the plant Arabidopsis thaliana.</title>
        <authorList>
            <person name="Mayer K.F.X."/>
            <person name="Schueller C."/>
            <person name="Wambutt R."/>
            <person name="Murphy G."/>
            <person name="Volckaert G."/>
            <person name="Pohl T."/>
            <person name="Duesterhoeft A."/>
            <person name="Stiekema W."/>
            <person name="Entian K.-D."/>
            <person name="Terryn N."/>
            <person name="Harris B."/>
            <person name="Ansorge W."/>
            <person name="Brandt P."/>
            <person name="Grivell L.A."/>
            <person name="Rieger M."/>
            <person name="Weichselgartner M."/>
            <person name="de Simone V."/>
            <person name="Obermaier B."/>
            <person name="Mache R."/>
            <person name="Mueller M."/>
            <person name="Kreis M."/>
            <person name="Delseny M."/>
            <person name="Puigdomenech P."/>
            <person name="Watson M."/>
            <person name="Schmidtheini T."/>
            <person name="Reichert B."/>
            <person name="Portetelle D."/>
            <person name="Perez-Alonso M."/>
            <person name="Boutry M."/>
            <person name="Bancroft I."/>
            <person name="Vos P."/>
            <person name="Hoheisel J."/>
            <person name="Zimmermann W."/>
            <person name="Wedler H."/>
            <person name="Ridley P."/>
            <person name="Langham S.-A."/>
            <person name="McCullagh B."/>
            <person name="Bilham L."/>
            <person name="Robben J."/>
            <person name="van der Schueren J."/>
            <person name="Grymonprez B."/>
            <person name="Chuang Y.-J."/>
            <person name="Vandenbussche F."/>
            <person name="Braeken M."/>
            <person name="Weltjens I."/>
            <person name="Voet M."/>
            <person name="Bastiaens I."/>
            <person name="Aert R."/>
            <person name="Defoor E."/>
            <person name="Weitzenegger T."/>
            <person name="Bothe G."/>
            <person name="Ramsperger U."/>
            <person name="Hilbert H."/>
            <person name="Braun M."/>
            <person name="Holzer E."/>
            <person name="Brandt A."/>
            <person name="Peters S."/>
            <person name="van Staveren M."/>
            <person name="Dirkse W."/>
            <person name="Mooijman P."/>
            <person name="Klein Lankhorst R."/>
            <person name="Rose M."/>
            <person name="Hauf J."/>
            <person name="Koetter P."/>
            <person name="Berneiser S."/>
            <person name="Hempel S."/>
            <person name="Feldpausch M."/>
            <person name="Lamberth S."/>
            <person name="Van den Daele H."/>
            <person name="De Keyser A."/>
            <person name="Buysshaert C."/>
            <person name="Gielen J."/>
            <person name="Villarroel R."/>
            <person name="De Clercq R."/>
            <person name="van Montagu M."/>
            <person name="Rogers J."/>
            <person name="Cronin A."/>
            <person name="Quail M.A."/>
            <person name="Bray-Allen S."/>
            <person name="Clark L."/>
            <person name="Doggett J."/>
            <person name="Hall S."/>
            <person name="Kay M."/>
            <person name="Lennard N."/>
            <person name="McLay K."/>
            <person name="Mayes R."/>
            <person name="Pettett A."/>
            <person name="Rajandream M.A."/>
            <person name="Lyne M."/>
            <person name="Benes V."/>
            <person name="Rechmann S."/>
            <person name="Borkova D."/>
            <person name="Bloecker H."/>
            <person name="Scharfe M."/>
            <person name="Grimm M."/>
            <person name="Loehnert T.-H."/>
            <person name="Dose S."/>
            <person name="de Haan M."/>
            <person name="Maarse A.C."/>
            <person name="Schaefer M."/>
            <person name="Mueller-Auer S."/>
            <person name="Gabel C."/>
            <person name="Fuchs M."/>
            <person name="Fartmann B."/>
            <person name="Granderath K."/>
            <person name="Dauner D."/>
            <person name="Herzl A."/>
            <person name="Neumann S."/>
            <person name="Argiriou A."/>
            <person name="Vitale D."/>
            <person name="Liguori R."/>
            <person name="Piravandi E."/>
            <person name="Massenet O."/>
            <person name="Quigley F."/>
            <person name="Clabauld G."/>
            <person name="Muendlein A."/>
            <person name="Felber R."/>
            <person name="Schnabl S."/>
            <person name="Hiller R."/>
            <person name="Schmidt W."/>
            <person name="Lecharny A."/>
            <person name="Aubourg S."/>
            <person name="Chefdor F."/>
            <person name="Cooke R."/>
            <person name="Berger C."/>
            <person name="Monfort A."/>
            <person name="Casacuberta E."/>
            <person name="Gibbons T."/>
            <person name="Weber N."/>
            <person name="Vandenbol M."/>
            <person name="Bargues M."/>
            <person name="Terol J."/>
            <person name="Torres A."/>
            <person name="Perez-Perez A."/>
            <person name="Purnelle B."/>
            <person name="Bent E."/>
            <person name="Johnson S."/>
            <person name="Tacon D."/>
            <person name="Jesse T."/>
            <person name="Heijnen L."/>
            <person name="Schwarz S."/>
            <person name="Scholler P."/>
            <person name="Heber S."/>
            <person name="Francs P."/>
            <person name="Bielke C."/>
            <person name="Frishman D."/>
            <person name="Haase D."/>
            <person name="Lemcke K."/>
            <person name="Mewes H.-W."/>
            <person name="Stocker S."/>
            <person name="Zaccaria P."/>
            <person name="Bevan M."/>
            <person name="Wilson R.K."/>
            <person name="de la Bastide M."/>
            <person name="Habermann K."/>
            <person name="Parnell L."/>
            <person name="Dedhia N."/>
            <person name="Gnoj L."/>
            <person name="Schutz K."/>
            <person name="Huang E."/>
            <person name="Spiegel L."/>
            <person name="Sekhon M."/>
            <person name="Murray J."/>
            <person name="Sheet P."/>
            <person name="Cordes M."/>
            <person name="Abu-Threideh J."/>
            <person name="Stoneking T."/>
            <person name="Kalicki J."/>
            <person name="Graves T."/>
            <person name="Harmon G."/>
            <person name="Edwards J."/>
            <person name="Latreille P."/>
            <person name="Courtney L."/>
            <person name="Cloud J."/>
            <person name="Abbott A."/>
            <person name="Scott K."/>
            <person name="Johnson D."/>
            <person name="Minx P."/>
            <person name="Bentley D."/>
            <person name="Fulton B."/>
            <person name="Miller N."/>
            <person name="Greco T."/>
            <person name="Kemp K."/>
            <person name="Kramer J."/>
            <person name="Fulton L."/>
            <person name="Mardis E."/>
            <person name="Dante M."/>
            <person name="Pepin K."/>
            <person name="Hillier L.W."/>
            <person name="Nelson J."/>
            <person name="Spieth J."/>
            <person name="Ryan E."/>
            <person name="Andrews S."/>
            <person name="Geisel C."/>
            <person name="Layman D."/>
            <person name="Du H."/>
            <person name="Ali J."/>
            <person name="Berghoff A."/>
            <person name="Jones K."/>
            <person name="Drone K."/>
            <person name="Cotton M."/>
            <person name="Joshu C."/>
            <person name="Antonoiu B."/>
            <person name="Zidanic M."/>
            <person name="Strong C."/>
            <person name="Sun H."/>
            <person name="Lamar B."/>
            <person name="Yordan C."/>
            <person name="Ma P."/>
            <person name="Zhong J."/>
            <person name="Preston R."/>
            <person name="Vil D."/>
            <person name="Shekher M."/>
            <person name="Matero A."/>
            <person name="Shah R."/>
            <person name="Swaby I.K."/>
            <person name="O'Shaughnessy A."/>
            <person name="Rodriguez M."/>
            <person name="Hoffman J."/>
            <person name="Till S."/>
            <person name="Granat S."/>
            <person name="Shohdy N."/>
            <person name="Hasegawa A."/>
            <person name="Hameed A."/>
            <person name="Lodhi M."/>
            <person name="Johnson A."/>
            <person name="Chen E."/>
            <person name="Marra M.A."/>
            <person name="Martienssen R."/>
            <person name="McCombie W.R."/>
        </authorList>
    </citation>
    <scope>NUCLEOTIDE SEQUENCE [LARGE SCALE GENOMIC DNA]</scope>
    <source>
        <strain>cv. Columbia</strain>
    </source>
</reference>
<reference key="3">
    <citation type="journal article" date="2017" name="Plant J.">
        <title>Araport11: a complete reannotation of the Arabidopsis thaliana reference genome.</title>
        <authorList>
            <person name="Cheng C.Y."/>
            <person name="Krishnakumar V."/>
            <person name="Chan A.P."/>
            <person name="Thibaud-Nissen F."/>
            <person name="Schobel S."/>
            <person name="Town C.D."/>
        </authorList>
    </citation>
    <scope>GENOME REANNOTATION</scope>
    <source>
        <strain>cv. Columbia</strain>
    </source>
</reference>
<reference key="4">
    <citation type="journal article" date="2003" name="Science">
        <title>Empirical analysis of transcriptional activity in the Arabidopsis genome.</title>
        <authorList>
            <person name="Yamada K."/>
            <person name="Lim J."/>
            <person name="Dale J.M."/>
            <person name="Chen H."/>
            <person name="Shinn P."/>
            <person name="Palm C.J."/>
            <person name="Southwick A.M."/>
            <person name="Wu H.C."/>
            <person name="Kim C.J."/>
            <person name="Nguyen M."/>
            <person name="Pham P.K."/>
            <person name="Cheuk R.F."/>
            <person name="Karlin-Newmann G."/>
            <person name="Liu S.X."/>
            <person name="Lam B."/>
            <person name="Sakano H."/>
            <person name="Wu T."/>
            <person name="Yu G."/>
            <person name="Miranda M."/>
            <person name="Quach H.L."/>
            <person name="Tripp M."/>
            <person name="Chang C.H."/>
            <person name="Lee J.M."/>
            <person name="Toriumi M.J."/>
            <person name="Chan M.M."/>
            <person name="Tang C.C."/>
            <person name="Onodera C.S."/>
            <person name="Deng J.M."/>
            <person name="Akiyama K."/>
            <person name="Ansari Y."/>
            <person name="Arakawa T."/>
            <person name="Banh J."/>
            <person name="Banno F."/>
            <person name="Bowser L."/>
            <person name="Brooks S.Y."/>
            <person name="Carninci P."/>
            <person name="Chao Q."/>
            <person name="Choy N."/>
            <person name="Enju A."/>
            <person name="Goldsmith A.D."/>
            <person name="Gurjal M."/>
            <person name="Hansen N.F."/>
            <person name="Hayashizaki Y."/>
            <person name="Johnson-Hopson C."/>
            <person name="Hsuan V.W."/>
            <person name="Iida K."/>
            <person name="Karnes M."/>
            <person name="Khan S."/>
            <person name="Koesema E."/>
            <person name="Ishida J."/>
            <person name="Jiang P.X."/>
            <person name="Jones T."/>
            <person name="Kawai J."/>
            <person name="Kamiya A."/>
            <person name="Meyers C."/>
            <person name="Nakajima M."/>
            <person name="Narusaka M."/>
            <person name="Seki M."/>
            <person name="Sakurai T."/>
            <person name="Satou M."/>
            <person name="Tamse R."/>
            <person name="Vaysberg M."/>
            <person name="Wallender E.K."/>
            <person name="Wong C."/>
            <person name="Yamamura Y."/>
            <person name="Yuan S."/>
            <person name="Shinozaki K."/>
            <person name="Davis R.W."/>
            <person name="Theologis A."/>
            <person name="Ecker J.R."/>
        </authorList>
    </citation>
    <scope>NUCLEOTIDE SEQUENCE [LARGE SCALE MRNA]</scope>
    <source>
        <strain>cv. Columbia</strain>
    </source>
</reference>
<reference key="5">
    <citation type="journal article" date="2007" name="Mol. Cell. Proteomics">
        <title>Multidimensional protein identification technology (MudPIT) analysis of ubiquitinated proteins in plants.</title>
        <authorList>
            <person name="Maor R."/>
            <person name="Jones A."/>
            <person name="Nuehse T.S."/>
            <person name="Studholme D.J."/>
            <person name="Peck S.C."/>
            <person name="Shirasu K."/>
        </authorList>
    </citation>
    <scope>IDENTIFICATION BY MASS SPECTROMETRY [LARGE SCALE ANALYSIS]</scope>
    <source>
        <strain>cv. Landsberg erecta</strain>
    </source>
</reference>
<accession>O04619</accession>
<organism>
    <name type="scientific">Arabidopsis thaliana</name>
    <name type="common">Mouse-ear cress</name>
    <dbReference type="NCBI Taxonomy" id="3702"/>
    <lineage>
        <taxon>Eukaryota</taxon>
        <taxon>Viridiplantae</taxon>
        <taxon>Streptophyta</taxon>
        <taxon>Embryophyta</taxon>
        <taxon>Tracheophyta</taxon>
        <taxon>Spermatophyta</taxon>
        <taxon>Magnoliopsida</taxon>
        <taxon>eudicotyledons</taxon>
        <taxon>Gunneridae</taxon>
        <taxon>Pentapetalae</taxon>
        <taxon>rosids</taxon>
        <taxon>malvids</taxon>
        <taxon>Brassicales</taxon>
        <taxon>Brassicaceae</taxon>
        <taxon>Camelineae</taxon>
        <taxon>Arabidopsis</taxon>
    </lineage>
</organism>
<gene>
    <name type="primary">ADNT1</name>
    <name type="ordered locus">At4g01100</name>
    <name type="ORF">A_IG002N01.16</name>
    <name type="ORF">F2N1.16</name>
</gene>
<sequence length="352" mass="38325">MASEDVKRTESAAVSTIVNLAEEAREGVKAPSYAFKSICKSLFAGGVAGGVSRTAVAPLERMKILLQVQNPHNIKYSGTVQGLKHIWRTEGLRGLFKGNGTNCARIVPNSAVKFFSYEQASNGILYMYRQRTGNENAQLTPLLRLGAGATAGIIAMSATYPMDMVRGRLTVQTANSPYQYRGIAHALATVLREEGPRALYRGWLPSVIGVVPYVGLNFSVYESLKDWLVKENPYGLVENNELTVVTRLTCGAIAGTVGQTIAYPLDVIRRRMQMVGWKDASAIVTGEGRSTASLEYTGMVDAFRKTVRHEGFGALYKGLVPNSVKVVPSIAIAFVTYEMVKDVLGVEFRISD</sequence>
<dbReference type="EMBL" id="AM931440">
    <property type="protein sequence ID" value="CAP64296.1"/>
    <property type="molecule type" value="mRNA"/>
</dbReference>
<dbReference type="EMBL" id="AF007269">
    <property type="protein sequence ID" value="AAB61037.1"/>
    <property type="molecule type" value="Genomic_DNA"/>
</dbReference>
<dbReference type="EMBL" id="AL161491">
    <property type="protein sequence ID" value="CAB80919.1"/>
    <property type="molecule type" value="Genomic_DNA"/>
</dbReference>
<dbReference type="EMBL" id="CP002687">
    <property type="protein sequence ID" value="AEE81981.1"/>
    <property type="molecule type" value="Genomic_DNA"/>
</dbReference>
<dbReference type="EMBL" id="AF360168">
    <property type="protein sequence ID" value="AAK25878.1"/>
    <property type="molecule type" value="mRNA"/>
</dbReference>
<dbReference type="EMBL" id="AF412085">
    <property type="protein sequence ID" value="AAL06538.1"/>
    <property type="molecule type" value="mRNA"/>
</dbReference>
<dbReference type="EMBL" id="AY056343">
    <property type="protein sequence ID" value="AAL07192.1"/>
    <property type="molecule type" value="mRNA"/>
</dbReference>
<dbReference type="PIR" id="T01729">
    <property type="entry name" value="T01729"/>
</dbReference>
<dbReference type="RefSeq" id="NP_192019.1">
    <molecule id="O04619-1"/>
    <property type="nucleotide sequence ID" value="NM_116340.4"/>
</dbReference>
<dbReference type="SMR" id="O04619"/>
<dbReference type="FunCoup" id="O04619">
    <property type="interactions" value="2033"/>
</dbReference>
<dbReference type="IntAct" id="O04619">
    <property type="interactions" value="1"/>
</dbReference>
<dbReference type="STRING" id="3702.O04619"/>
<dbReference type="TCDB" id="2.A.29.23.4">
    <property type="family name" value="the mitochondrial carrier (mc) family"/>
</dbReference>
<dbReference type="iPTMnet" id="O04619"/>
<dbReference type="MetOSite" id="O04619"/>
<dbReference type="PaxDb" id="3702-AT4G01100.2"/>
<dbReference type="ProteomicsDB" id="244927">
    <molecule id="O04619-1"/>
</dbReference>
<dbReference type="DNASU" id="827899"/>
<dbReference type="EnsemblPlants" id="AT4G01100.1">
    <molecule id="O04619-1"/>
    <property type="protein sequence ID" value="AT4G01100.1"/>
    <property type="gene ID" value="AT4G01100"/>
</dbReference>
<dbReference type="GeneID" id="827899"/>
<dbReference type="Gramene" id="AT4G01100.1">
    <molecule id="O04619-1"/>
    <property type="protein sequence ID" value="AT4G01100.1"/>
    <property type="gene ID" value="AT4G01100"/>
</dbReference>
<dbReference type="KEGG" id="ath:AT4G01100"/>
<dbReference type="Araport" id="AT4G01100"/>
<dbReference type="TAIR" id="AT4G01100">
    <property type="gene designation" value="ADNT1"/>
</dbReference>
<dbReference type="eggNOG" id="KOG0752">
    <property type="taxonomic scope" value="Eukaryota"/>
</dbReference>
<dbReference type="HOGENOM" id="CLU_015166_10_3_1"/>
<dbReference type="InParanoid" id="O04619"/>
<dbReference type="PhylomeDB" id="O04619"/>
<dbReference type="PRO" id="PR:O04619"/>
<dbReference type="Proteomes" id="UP000006548">
    <property type="component" value="Chromosome 4"/>
</dbReference>
<dbReference type="ExpressionAtlas" id="O04619">
    <property type="expression patterns" value="baseline and differential"/>
</dbReference>
<dbReference type="GO" id="GO:0005743">
    <property type="term" value="C:mitochondrial inner membrane"/>
    <property type="evidence" value="ECO:0007669"/>
    <property type="project" value="UniProtKB-SubCell"/>
</dbReference>
<dbReference type="GO" id="GO:0015297">
    <property type="term" value="F:antiporter activity"/>
    <property type="evidence" value="ECO:0007669"/>
    <property type="project" value="UniProtKB-KW"/>
</dbReference>
<dbReference type="FunFam" id="1.50.40.10:FF:000116">
    <property type="entry name" value="Mitochondrial substrate carrier"/>
    <property type="match status" value="1"/>
</dbReference>
<dbReference type="Gene3D" id="1.50.40.10">
    <property type="entry name" value="Mitochondrial carrier domain"/>
    <property type="match status" value="1"/>
</dbReference>
<dbReference type="InterPro" id="IPR002067">
    <property type="entry name" value="Mit_carrier"/>
</dbReference>
<dbReference type="InterPro" id="IPR018108">
    <property type="entry name" value="Mitochondrial_sb/sol_carrier"/>
</dbReference>
<dbReference type="InterPro" id="IPR023395">
    <property type="entry name" value="Mt_carrier_dom_sf"/>
</dbReference>
<dbReference type="PANTHER" id="PTHR24089">
    <property type="entry name" value="SOLUTE CARRIER FAMILY 25"/>
    <property type="match status" value="1"/>
</dbReference>
<dbReference type="Pfam" id="PF00153">
    <property type="entry name" value="Mito_carr"/>
    <property type="match status" value="3"/>
</dbReference>
<dbReference type="PRINTS" id="PR00926">
    <property type="entry name" value="MITOCARRIER"/>
</dbReference>
<dbReference type="SUPFAM" id="SSF103506">
    <property type="entry name" value="Mitochondrial carrier"/>
    <property type="match status" value="1"/>
</dbReference>
<dbReference type="PROSITE" id="PS50920">
    <property type="entry name" value="SOLCAR"/>
    <property type="match status" value="3"/>
</dbReference>
<comment type="function">
    <text evidence="2">Mitochondrial adenylate carrier that catalyzes specifically the transport of ATP, ADP and AMP by a counter-exchange mechanism across the inner mitochondrial membrane. Substrate preference in reconstituted proteoliposomes is ATP &gt; AMP &gt; ADP. May play a role in oxidative phosphorylation and be important for the provision of energy required to support growth in heterotrophic tissues.</text>
</comment>
<comment type="activity regulation">
    <text evidence="2">Inhibited by pyridoxal 5-phosphate, bathophenanthroline, mersalyl, p-hydroxymercuribenzoate and tannic acid.</text>
</comment>
<comment type="subcellular location">
    <subcellularLocation>
        <location evidence="4">Mitochondrion inner membrane</location>
        <topology evidence="4">Multi-pass membrane protein</topology>
    </subcellularLocation>
</comment>
<comment type="alternative products">
    <event type="alternative splicing"/>
    <isoform>
        <id>O04619-1</id>
        <name>1</name>
        <sequence type="displayed"/>
    </isoform>
    <text>A number of isoforms are produced. According to EST sequences.</text>
</comment>
<comment type="tissue specificity">
    <text evidence="2">Expressed in seedling radicles and roots, vasculature of cotyledons, leaf primordia, leaves and sepals.</text>
</comment>
<comment type="disruption phenotype">
    <text evidence="2">Reduced root growth and respiration.</text>
</comment>
<comment type="similarity">
    <text evidence="3">Belongs to the mitochondrial carrier (TC 2.A.29) family.</text>
</comment>
<feature type="chain" id="PRO_0000420757" description="Mitochondrial adenine nucleotide transporter ADNT1">
    <location>
        <begin position="1"/>
        <end position="352"/>
    </location>
</feature>
<feature type="transmembrane region" description="Helical; Name=1" evidence="1">
    <location>
        <begin position="41"/>
        <end position="61"/>
    </location>
</feature>
<feature type="transmembrane region" description="Helical; Name=2" evidence="1">
    <location>
        <begin position="100"/>
        <end position="120"/>
    </location>
</feature>
<feature type="transmembrane region" description="Helical; Name=3" evidence="1">
    <location>
        <begin position="145"/>
        <end position="162"/>
    </location>
</feature>
<feature type="transmembrane region" description="Helical; Name=4" evidence="1">
    <location>
        <begin position="202"/>
        <end position="221"/>
    </location>
</feature>
<feature type="transmembrane region" description="Helical; Name=5" evidence="1">
    <location>
        <begin position="242"/>
        <end position="263"/>
    </location>
</feature>
<feature type="transmembrane region" description="Helical; Name=6" evidence="1">
    <location>
        <begin position="324"/>
        <end position="340"/>
    </location>
</feature>
<feature type="repeat" description="Solcar 1">
    <location>
        <begin position="36"/>
        <end position="123"/>
    </location>
</feature>
<feature type="repeat" description="Solcar 2">
    <location>
        <begin position="139"/>
        <end position="227"/>
    </location>
</feature>
<feature type="repeat" description="Solcar 3">
    <location>
        <begin position="242"/>
        <end position="343"/>
    </location>
</feature>
<keyword id="KW-0025">Alternative splicing</keyword>
<keyword id="KW-0050">Antiport</keyword>
<keyword id="KW-0472">Membrane</keyword>
<keyword id="KW-0496">Mitochondrion</keyword>
<keyword id="KW-0999">Mitochondrion inner membrane</keyword>
<keyword id="KW-1185">Reference proteome</keyword>
<keyword id="KW-0677">Repeat</keyword>
<keyword id="KW-0812">Transmembrane</keyword>
<keyword id="KW-1133">Transmembrane helix</keyword>
<keyword id="KW-0813">Transport</keyword>
<evidence type="ECO:0000255" key="1"/>
<evidence type="ECO:0000269" key="2">
    <source>
    </source>
</evidence>
<evidence type="ECO:0000305" key="3"/>
<evidence type="ECO:0000305" key="4">
    <source>
    </source>
</evidence>
<protein>
    <recommendedName>
        <fullName>Mitochondrial adenine nucleotide transporter ADNT1</fullName>
    </recommendedName>
    <alternativeName>
        <fullName>Adenine nucleotide transporter 1</fullName>
    </alternativeName>
</protein>
<proteinExistence type="evidence at protein level"/>